<feature type="chain" id="PRO_1000065366" description="UPF0298 protein SAB0986">
    <location>
        <begin position="1"/>
        <end position="84"/>
    </location>
</feature>
<comment type="subcellular location">
    <subcellularLocation>
        <location evidence="1">Cytoplasm</location>
    </subcellularLocation>
</comment>
<comment type="similarity">
    <text evidence="1">Belongs to the UPF0298 family.</text>
</comment>
<accession>Q2YXA3</accession>
<gene>
    <name type="ordered locus">SAB0986</name>
</gene>
<proteinExistence type="inferred from homology"/>
<sequence length="84" mass="10413">MNLIPRTSIVVYLKHMKHERQIRKYGHIVHSNRDRKFVIMYVNEQDVDQIVHKLMQLKYVRHIDGSPYKYLKKTYEKEKHEIYN</sequence>
<organism>
    <name type="scientific">Staphylococcus aureus (strain bovine RF122 / ET3-1)</name>
    <dbReference type="NCBI Taxonomy" id="273036"/>
    <lineage>
        <taxon>Bacteria</taxon>
        <taxon>Bacillati</taxon>
        <taxon>Bacillota</taxon>
        <taxon>Bacilli</taxon>
        <taxon>Bacillales</taxon>
        <taxon>Staphylococcaceae</taxon>
        <taxon>Staphylococcus</taxon>
    </lineage>
</organism>
<reference key="1">
    <citation type="journal article" date="2007" name="PLoS ONE">
        <title>Molecular correlates of host specialization in Staphylococcus aureus.</title>
        <authorList>
            <person name="Herron-Olson L."/>
            <person name="Fitzgerald J.R."/>
            <person name="Musser J.M."/>
            <person name="Kapur V."/>
        </authorList>
    </citation>
    <scope>NUCLEOTIDE SEQUENCE [LARGE SCALE GENOMIC DNA]</scope>
    <source>
        <strain>bovine RF122 / ET3-1</strain>
    </source>
</reference>
<dbReference type="EMBL" id="AJ938182">
    <property type="protein sequence ID" value="CAI80674.1"/>
    <property type="molecule type" value="Genomic_DNA"/>
</dbReference>
<dbReference type="RefSeq" id="WP_001049150.1">
    <property type="nucleotide sequence ID" value="NC_007622.1"/>
</dbReference>
<dbReference type="SMR" id="Q2YXA3"/>
<dbReference type="KEGG" id="sab:SAB0986"/>
<dbReference type="HOGENOM" id="CLU_159890_2_1_9"/>
<dbReference type="GO" id="GO:0005737">
    <property type="term" value="C:cytoplasm"/>
    <property type="evidence" value="ECO:0007669"/>
    <property type="project" value="UniProtKB-SubCell"/>
</dbReference>
<dbReference type="HAMAP" id="MF_01126">
    <property type="entry name" value="UPF0298"/>
    <property type="match status" value="1"/>
</dbReference>
<dbReference type="InterPro" id="IPR016979">
    <property type="entry name" value="DUF2129"/>
</dbReference>
<dbReference type="Pfam" id="PF09902">
    <property type="entry name" value="DUF2129"/>
    <property type="match status" value="1"/>
</dbReference>
<dbReference type="PIRSF" id="PIRSF031653">
    <property type="entry name" value="UCP031653"/>
    <property type="match status" value="1"/>
</dbReference>
<evidence type="ECO:0000255" key="1">
    <source>
        <dbReference type="HAMAP-Rule" id="MF_01126"/>
    </source>
</evidence>
<protein>
    <recommendedName>
        <fullName evidence="1">UPF0298 protein SAB0986</fullName>
    </recommendedName>
</protein>
<keyword id="KW-0963">Cytoplasm</keyword>
<name>Y986_STAAB</name>